<evidence type="ECO:0000255" key="1">
    <source>
        <dbReference type="HAMAP-Rule" id="MF_01145"/>
    </source>
</evidence>
<keyword id="KW-1003">Cell membrane</keyword>
<keyword id="KW-0413">Isomerase</keyword>
<keyword id="KW-0449">Lipoprotein</keyword>
<keyword id="KW-0472">Membrane</keyword>
<keyword id="KW-0564">Palmitate</keyword>
<keyword id="KW-1185">Reference proteome</keyword>
<keyword id="KW-0697">Rotamase</keyword>
<keyword id="KW-0732">Signal</keyword>
<proteinExistence type="inferred from homology"/>
<comment type="function">
    <text evidence="1">Plays a major role in protein secretion by helping the post-translocational extracellular folding of several secreted proteins.</text>
</comment>
<comment type="catalytic activity">
    <reaction evidence="1">
        <text>[protein]-peptidylproline (omega=180) = [protein]-peptidylproline (omega=0)</text>
        <dbReference type="Rhea" id="RHEA:16237"/>
        <dbReference type="Rhea" id="RHEA-COMP:10747"/>
        <dbReference type="Rhea" id="RHEA-COMP:10748"/>
        <dbReference type="ChEBI" id="CHEBI:83833"/>
        <dbReference type="ChEBI" id="CHEBI:83834"/>
        <dbReference type="EC" id="5.2.1.8"/>
    </reaction>
</comment>
<comment type="subcellular location">
    <subcellularLocation>
        <location evidence="1">Cell membrane</location>
        <topology evidence="1">Lipid-anchor</topology>
    </subcellularLocation>
</comment>
<comment type="similarity">
    <text evidence="1">Belongs to the PrsA family.</text>
</comment>
<dbReference type="EC" id="5.2.1.8" evidence="1"/>
<dbReference type="EMBL" id="AE015927">
    <property type="protein sequence ID" value="AAO34844.1"/>
    <property type="molecule type" value="Genomic_DNA"/>
</dbReference>
<dbReference type="RefSeq" id="WP_011098514.1">
    <property type="nucleotide sequence ID" value="NC_004557.1"/>
</dbReference>
<dbReference type="SMR" id="Q899I2"/>
<dbReference type="STRING" id="212717.CTC_00195"/>
<dbReference type="GeneID" id="24255027"/>
<dbReference type="KEGG" id="ctc:CTC_00195"/>
<dbReference type="HOGENOM" id="CLU_034646_5_2_9"/>
<dbReference type="OrthoDB" id="14196at2"/>
<dbReference type="Proteomes" id="UP000001412">
    <property type="component" value="Chromosome"/>
</dbReference>
<dbReference type="GO" id="GO:0005886">
    <property type="term" value="C:plasma membrane"/>
    <property type="evidence" value="ECO:0007669"/>
    <property type="project" value="UniProtKB-SubCell"/>
</dbReference>
<dbReference type="GO" id="GO:0003755">
    <property type="term" value="F:peptidyl-prolyl cis-trans isomerase activity"/>
    <property type="evidence" value="ECO:0007669"/>
    <property type="project" value="UniProtKB-UniRule"/>
</dbReference>
<dbReference type="GO" id="GO:0006457">
    <property type="term" value="P:protein folding"/>
    <property type="evidence" value="ECO:0007669"/>
    <property type="project" value="UniProtKB-UniRule"/>
</dbReference>
<dbReference type="Gene3D" id="3.10.50.40">
    <property type="match status" value="1"/>
</dbReference>
<dbReference type="Gene3D" id="1.10.4030.10">
    <property type="entry name" value="Porin chaperone SurA, peptide-binding domain"/>
    <property type="match status" value="1"/>
</dbReference>
<dbReference type="HAMAP" id="MF_01145">
    <property type="entry name" value="Foldase_PrsA"/>
    <property type="match status" value="1"/>
</dbReference>
<dbReference type="InterPro" id="IPR023059">
    <property type="entry name" value="Foldase_PrsA"/>
</dbReference>
<dbReference type="InterPro" id="IPR046357">
    <property type="entry name" value="PPIase_dom_sf"/>
</dbReference>
<dbReference type="InterPro" id="IPR000297">
    <property type="entry name" value="PPIase_PpiC"/>
</dbReference>
<dbReference type="InterPro" id="IPR050245">
    <property type="entry name" value="PrsA_foldase"/>
</dbReference>
<dbReference type="InterPro" id="IPR027304">
    <property type="entry name" value="Trigger_fact/SurA_dom_sf"/>
</dbReference>
<dbReference type="NCBIfam" id="NF000809">
    <property type="entry name" value="PRK00059.1"/>
    <property type="match status" value="1"/>
</dbReference>
<dbReference type="PANTHER" id="PTHR47245:SF1">
    <property type="entry name" value="FOLDASE PROTEIN PRSA"/>
    <property type="match status" value="1"/>
</dbReference>
<dbReference type="PANTHER" id="PTHR47245">
    <property type="entry name" value="PEPTIDYLPROLYL ISOMERASE"/>
    <property type="match status" value="1"/>
</dbReference>
<dbReference type="Pfam" id="PF13616">
    <property type="entry name" value="Rotamase_3"/>
    <property type="match status" value="1"/>
</dbReference>
<dbReference type="Pfam" id="PF13624">
    <property type="entry name" value="SurA_N_3"/>
    <property type="match status" value="1"/>
</dbReference>
<dbReference type="SUPFAM" id="SSF54534">
    <property type="entry name" value="FKBP-like"/>
    <property type="match status" value="1"/>
</dbReference>
<dbReference type="SUPFAM" id="SSF109998">
    <property type="entry name" value="Triger factor/SurA peptide-binding domain-like"/>
    <property type="match status" value="1"/>
</dbReference>
<dbReference type="PROSITE" id="PS50198">
    <property type="entry name" value="PPIC_PPIASE_2"/>
    <property type="match status" value="1"/>
</dbReference>
<dbReference type="PROSITE" id="PS51257">
    <property type="entry name" value="PROKAR_LIPOPROTEIN"/>
    <property type="match status" value="1"/>
</dbReference>
<name>PRSA_CLOTE</name>
<feature type="signal peptide" evidence="1">
    <location>
        <begin position="1"/>
        <end position="26"/>
    </location>
</feature>
<feature type="chain" id="PRO_0000029302" description="Foldase protein PrsA">
    <location>
        <begin position="27"/>
        <end position="339"/>
    </location>
</feature>
<feature type="domain" description="PpiC" evidence="1">
    <location>
        <begin position="197"/>
        <end position="287"/>
    </location>
</feature>
<feature type="lipid moiety-binding region" description="N-palmitoyl cysteine" evidence="1">
    <location>
        <position position="27"/>
    </location>
</feature>
<feature type="lipid moiety-binding region" description="S-diacylglycerol cysteine" evidence="1">
    <location>
        <position position="27"/>
    </location>
</feature>
<reference key="1">
    <citation type="journal article" date="2003" name="Proc. Natl. Acad. Sci. U.S.A.">
        <title>The genome sequence of Clostridium tetani, the causative agent of tetanus disease.</title>
        <authorList>
            <person name="Brueggemann H."/>
            <person name="Baeumer S."/>
            <person name="Fricke W.F."/>
            <person name="Wiezer A."/>
            <person name="Liesegang H."/>
            <person name="Decker I."/>
            <person name="Herzberg C."/>
            <person name="Martinez-Arias R."/>
            <person name="Merkl R."/>
            <person name="Henne A."/>
            <person name="Gottschalk G."/>
        </authorList>
    </citation>
    <scope>NUCLEOTIDE SEQUENCE [LARGE SCALE GENOMIC DNA]</scope>
    <source>
        <strain>Massachusetts / E88</strain>
    </source>
</reference>
<sequence length="339" mass="39021">MKHLKNNTKKFTALLFALLFSMSIAGCNMIEKTPEAIEKSPVAKVGKKTITRGELDTYPILAEQLTKLKEQFGGDLSKNAEIKDQLIQFKSQVLEQMIQEEIVFEKSEELKVDNAKVEKEVEKNLKNFMDQGFQGNKDKYKEDLKKMGTTEESIKRFFKAQVITEEVSKQVVKDVKVDDNTAKKHYEESKYTFTVNKPTFHAQHVLVKTEEEAKKVKARLDKGEDIKKIAKELSIDPSAKENSGDLGKAPYSSMVKPFADAIVKLNKGEISQPVKSQFGYHVIKLIDKDEVTFKDFNSVKEQIKKDLLETEKRKVFNEKIEQWKKELKVETKKYEKNII</sequence>
<gene>
    <name evidence="1" type="primary">prsA</name>
    <name type="ordered locus">CTC_00195</name>
</gene>
<accession>Q899I2</accession>
<organism>
    <name type="scientific">Clostridium tetani (strain Massachusetts / E88)</name>
    <dbReference type="NCBI Taxonomy" id="212717"/>
    <lineage>
        <taxon>Bacteria</taxon>
        <taxon>Bacillati</taxon>
        <taxon>Bacillota</taxon>
        <taxon>Clostridia</taxon>
        <taxon>Eubacteriales</taxon>
        <taxon>Clostridiaceae</taxon>
        <taxon>Clostridium</taxon>
    </lineage>
</organism>
<protein>
    <recommendedName>
        <fullName evidence="1">Foldase protein PrsA</fullName>
        <ecNumber evidence="1">5.2.1.8</ecNumber>
    </recommendedName>
</protein>